<sequence>MPAECVNEVSAAKPSDDNAASNQTQSGAAPAEPAASEEPQQKTSSEKLESKEDDAAAKARQRQERFKALQARAKNAAERNLKETAAETQRLATDPALLSSLSRKHAFASHNLLKADTEAAGEDFERKRAWDWTIDESEKWDRRMEKKQRHRDDVAFQDYTQDARKVYKRQLRQMQPDMAAYEREKLAAIEKAAANGDLEIVETNDGEMIAVDKNGTFYSTADTIGFTENKPDRAGVDKLVADLRKAEEVRLKKRRERRGDEEPDVTYINEKNKQFNQKLARFYNKYTTEIRDSFERGTMI</sequence>
<proteinExistence type="inferred from homology"/>
<evidence type="ECO:0000250" key="1"/>
<evidence type="ECO:0000255" key="2"/>
<evidence type="ECO:0000256" key="3">
    <source>
        <dbReference type="SAM" id="MobiDB-lite"/>
    </source>
</evidence>
<evidence type="ECO:0000305" key="4"/>
<name>SYF2_ASPFU</name>
<protein>
    <recommendedName>
        <fullName>Pre-mRNA-splicing factor syf2</fullName>
    </recommendedName>
</protein>
<reference key="1">
    <citation type="journal article" date="2005" name="Nature">
        <title>Genomic sequence of the pathogenic and allergenic filamentous fungus Aspergillus fumigatus.</title>
        <authorList>
            <person name="Nierman W.C."/>
            <person name="Pain A."/>
            <person name="Anderson M.J."/>
            <person name="Wortman J.R."/>
            <person name="Kim H.S."/>
            <person name="Arroyo J."/>
            <person name="Berriman M."/>
            <person name="Abe K."/>
            <person name="Archer D.B."/>
            <person name="Bermejo C."/>
            <person name="Bennett J.W."/>
            <person name="Bowyer P."/>
            <person name="Chen D."/>
            <person name="Collins M."/>
            <person name="Coulsen R."/>
            <person name="Davies R."/>
            <person name="Dyer P.S."/>
            <person name="Farman M.L."/>
            <person name="Fedorova N."/>
            <person name="Fedorova N.D."/>
            <person name="Feldblyum T.V."/>
            <person name="Fischer R."/>
            <person name="Fosker N."/>
            <person name="Fraser A."/>
            <person name="Garcia J.L."/>
            <person name="Garcia M.J."/>
            <person name="Goble A."/>
            <person name="Goldman G.H."/>
            <person name="Gomi K."/>
            <person name="Griffith-Jones S."/>
            <person name="Gwilliam R."/>
            <person name="Haas B.J."/>
            <person name="Haas H."/>
            <person name="Harris D.E."/>
            <person name="Horiuchi H."/>
            <person name="Huang J."/>
            <person name="Humphray S."/>
            <person name="Jimenez J."/>
            <person name="Keller N."/>
            <person name="Khouri H."/>
            <person name="Kitamoto K."/>
            <person name="Kobayashi T."/>
            <person name="Konzack S."/>
            <person name="Kulkarni R."/>
            <person name="Kumagai T."/>
            <person name="Lafton A."/>
            <person name="Latge J.-P."/>
            <person name="Li W."/>
            <person name="Lord A."/>
            <person name="Lu C."/>
            <person name="Majoros W.H."/>
            <person name="May G.S."/>
            <person name="Miller B.L."/>
            <person name="Mohamoud Y."/>
            <person name="Molina M."/>
            <person name="Monod M."/>
            <person name="Mouyna I."/>
            <person name="Mulligan S."/>
            <person name="Murphy L.D."/>
            <person name="O'Neil S."/>
            <person name="Paulsen I."/>
            <person name="Penalva M.A."/>
            <person name="Pertea M."/>
            <person name="Price C."/>
            <person name="Pritchard B.L."/>
            <person name="Quail M.A."/>
            <person name="Rabbinowitsch E."/>
            <person name="Rawlins N."/>
            <person name="Rajandream M.A."/>
            <person name="Reichard U."/>
            <person name="Renauld H."/>
            <person name="Robson G.D."/>
            <person name="Rodriguez de Cordoba S."/>
            <person name="Rodriguez-Pena J.M."/>
            <person name="Ronning C.M."/>
            <person name="Rutter S."/>
            <person name="Salzberg S.L."/>
            <person name="Sanchez M."/>
            <person name="Sanchez-Ferrero J.C."/>
            <person name="Saunders D."/>
            <person name="Seeger K."/>
            <person name="Squares R."/>
            <person name="Squares S."/>
            <person name="Takeuchi M."/>
            <person name="Tekaia F."/>
            <person name="Turner G."/>
            <person name="Vazquez de Aldana C.R."/>
            <person name="Weidman J."/>
            <person name="White O."/>
            <person name="Woodward J.R."/>
            <person name="Yu J.-H."/>
            <person name="Fraser C.M."/>
            <person name="Galagan J.E."/>
            <person name="Asai K."/>
            <person name="Machida M."/>
            <person name="Hall N."/>
            <person name="Barrell B.G."/>
            <person name="Denning D.W."/>
        </authorList>
    </citation>
    <scope>NUCLEOTIDE SEQUENCE [LARGE SCALE GENOMIC DNA]</scope>
    <source>
        <strain>ATCC MYA-4609 / CBS 101355 / FGSC A1100 / Af293</strain>
    </source>
</reference>
<comment type="function">
    <text evidence="1">Involved in pre-mRNA splicing.</text>
</comment>
<comment type="subunit">
    <text evidence="1">Associated with the spliceosome.</text>
</comment>
<comment type="subcellular location">
    <subcellularLocation>
        <location evidence="1">Nucleus</location>
    </subcellularLocation>
</comment>
<comment type="similarity">
    <text evidence="4">Belongs to the SYF2 family.</text>
</comment>
<feature type="chain" id="PRO_0000072372" description="Pre-mRNA-splicing factor syf2">
    <location>
        <begin position="1"/>
        <end position="300"/>
    </location>
</feature>
<feature type="region of interest" description="Disordered" evidence="3">
    <location>
        <begin position="1"/>
        <end position="89"/>
    </location>
</feature>
<feature type="coiled-coil region" evidence="2">
    <location>
        <begin position="55"/>
        <end position="94"/>
    </location>
</feature>
<feature type="compositionally biased region" description="Polar residues" evidence="3">
    <location>
        <begin position="18"/>
        <end position="27"/>
    </location>
</feature>
<feature type="compositionally biased region" description="Low complexity" evidence="3">
    <location>
        <begin position="28"/>
        <end position="38"/>
    </location>
</feature>
<feature type="compositionally biased region" description="Basic and acidic residues" evidence="3">
    <location>
        <begin position="44"/>
        <end position="67"/>
    </location>
</feature>
<feature type="compositionally biased region" description="Basic and acidic residues" evidence="3">
    <location>
        <begin position="75"/>
        <end position="85"/>
    </location>
</feature>
<keyword id="KW-0175">Coiled coil</keyword>
<keyword id="KW-0507">mRNA processing</keyword>
<keyword id="KW-0508">mRNA splicing</keyword>
<keyword id="KW-0539">Nucleus</keyword>
<keyword id="KW-1185">Reference proteome</keyword>
<keyword id="KW-0747">Spliceosome</keyword>
<dbReference type="EMBL" id="AAHF01000005">
    <property type="protein sequence ID" value="EAL89808.2"/>
    <property type="molecule type" value="Genomic_DNA"/>
</dbReference>
<dbReference type="RefSeq" id="XP_751846.2">
    <property type="nucleotide sequence ID" value="XM_746753.2"/>
</dbReference>
<dbReference type="SMR" id="Q4WPM6"/>
<dbReference type="FunCoup" id="Q4WPM6">
    <property type="interactions" value="129"/>
</dbReference>
<dbReference type="STRING" id="330879.Q4WPM6"/>
<dbReference type="EnsemblFungi" id="EAL89808">
    <property type="protein sequence ID" value="EAL89808"/>
    <property type="gene ID" value="AFUA_4G09800"/>
</dbReference>
<dbReference type="GeneID" id="3509280"/>
<dbReference type="KEGG" id="afm:AFUA_4G09800"/>
<dbReference type="VEuPathDB" id="FungiDB:Afu4g09800"/>
<dbReference type="eggNOG" id="KOG2609">
    <property type="taxonomic scope" value="Eukaryota"/>
</dbReference>
<dbReference type="HOGENOM" id="CLU_051065_0_1_1"/>
<dbReference type="InParanoid" id="Q4WPM6"/>
<dbReference type="OMA" id="RRRMHND"/>
<dbReference type="OrthoDB" id="199717at2759"/>
<dbReference type="Proteomes" id="UP000002530">
    <property type="component" value="Chromosome 4"/>
</dbReference>
<dbReference type="GO" id="GO:0071013">
    <property type="term" value="C:catalytic step 2 spliceosome"/>
    <property type="evidence" value="ECO:0000318"/>
    <property type="project" value="GO_Central"/>
</dbReference>
<dbReference type="GO" id="GO:0071014">
    <property type="term" value="C:post-mRNA release spliceosomal complex"/>
    <property type="evidence" value="ECO:0000318"/>
    <property type="project" value="GO_Central"/>
</dbReference>
<dbReference type="GO" id="GO:0000974">
    <property type="term" value="C:Prp19 complex"/>
    <property type="evidence" value="ECO:0000318"/>
    <property type="project" value="GO_Central"/>
</dbReference>
<dbReference type="GO" id="GO:0006397">
    <property type="term" value="P:mRNA processing"/>
    <property type="evidence" value="ECO:0007669"/>
    <property type="project" value="UniProtKB-KW"/>
</dbReference>
<dbReference type="GO" id="GO:0008380">
    <property type="term" value="P:RNA splicing"/>
    <property type="evidence" value="ECO:0007669"/>
    <property type="project" value="UniProtKB-KW"/>
</dbReference>
<dbReference type="InterPro" id="IPR013260">
    <property type="entry name" value="mRNA_splic_SYF2"/>
</dbReference>
<dbReference type="PANTHER" id="PTHR13264">
    <property type="entry name" value="GCIP-INTERACTING PROTEIN P29"/>
    <property type="match status" value="1"/>
</dbReference>
<dbReference type="PANTHER" id="PTHR13264:SF5">
    <property type="entry name" value="PRE-MRNA-SPLICING FACTOR SYF2"/>
    <property type="match status" value="1"/>
</dbReference>
<dbReference type="Pfam" id="PF08231">
    <property type="entry name" value="SYF2"/>
    <property type="match status" value="1"/>
</dbReference>
<organism>
    <name type="scientific">Aspergillus fumigatus (strain ATCC MYA-4609 / CBS 101355 / FGSC A1100 / Af293)</name>
    <name type="common">Neosartorya fumigata</name>
    <dbReference type="NCBI Taxonomy" id="330879"/>
    <lineage>
        <taxon>Eukaryota</taxon>
        <taxon>Fungi</taxon>
        <taxon>Dikarya</taxon>
        <taxon>Ascomycota</taxon>
        <taxon>Pezizomycotina</taxon>
        <taxon>Eurotiomycetes</taxon>
        <taxon>Eurotiomycetidae</taxon>
        <taxon>Eurotiales</taxon>
        <taxon>Aspergillaceae</taxon>
        <taxon>Aspergillus</taxon>
        <taxon>Aspergillus subgen. Fumigati</taxon>
    </lineage>
</organism>
<gene>
    <name type="primary">syf2</name>
    <name type="ORF">AFUA_4G09800</name>
</gene>
<accession>Q4WPM6</accession>